<geneLocation type="mitochondrion"/>
<dbReference type="EMBL" id="AF376865">
    <property type="protein sequence ID" value="AAK57684.1"/>
    <property type="molecule type" value="Genomic_DNA"/>
</dbReference>
<dbReference type="GO" id="GO:0005743">
    <property type="term" value="C:mitochondrial inner membrane"/>
    <property type="evidence" value="ECO:0007669"/>
    <property type="project" value="UniProtKB-SubCell"/>
</dbReference>
<dbReference type="GO" id="GO:0045275">
    <property type="term" value="C:respiratory chain complex III"/>
    <property type="evidence" value="ECO:0007669"/>
    <property type="project" value="InterPro"/>
</dbReference>
<dbReference type="GO" id="GO:0046872">
    <property type="term" value="F:metal ion binding"/>
    <property type="evidence" value="ECO:0007669"/>
    <property type="project" value="UniProtKB-KW"/>
</dbReference>
<dbReference type="GO" id="GO:0008121">
    <property type="term" value="F:ubiquinol-cytochrome-c reductase activity"/>
    <property type="evidence" value="ECO:0007669"/>
    <property type="project" value="InterPro"/>
</dbReference>
<dbReference type="GO" id="GO:0006122">
    <property type="term" value="P:mitochondrial electron transport, ubiquinol to cytochrome c"/>
    <property type="evidence" value="ECO:0007669"/>
    <property type="project" value="TreeGrafter"/>
</dbReference>
<dbReference type="CDD" id="cd00290">
    <property type="entry name" value="cytochrome_b_C"/>
    <property type="match status" value="1"/>
</dbReference>
<dbReference type="CDD" id="cd00284">
    <property type="entry name" value="Cytochrome_b_N"/>
    <property type="match status" value="1"/>
</dbReference>
<dbReference type="FunFam" id="1.20.810.10:FF:000002">
    <property type="entry name" value="Cytochrome b"/>
    <property type="match status" value="1"/>
</dbReference>
<dbReference type="Gene3D" id="1.20.810.10">
    <property type="entry name" value="Cytochrome Bc1 Complex, Chain C"/>
    <property type="match status" value="1"/>
</dbReference>
<dbReference type="InterPro" id="IPR005798">
    <property type="entry name" value="Cyt_b/b6_C"/>
</dbReference>
<dbReference type="InterPro" id="IPR036150">
    <property type="entry name" value="Cyt_b/b6_C_sf"/>
</dbReference>
<dbReference type="InterPro" id="IPR005797">
    <property type="entry name" value="Cyt_b/b6_N"/>
</dbReference>
<dbReference type="InterPro" id="IPR027387">
    <property type="entry name" value="Cytb/b6-like_sf"/>
</dbReference>
<dbReference type="InterPro" id="IPR030689">
    <property type="entry name" value="Cytochrome_b"/>
</dbReference>
<dbReference type="InterPro" id="IPR048260">
    <property type="entry name" value="Cytochrome_b_C_euk/bac"/>
</dbReference>
<dbReference type="InterPro" id="IPR048259">
    <property type="entry name" value="Cytochrome_b_N_euk/bac"/>
</dbReference>
<dbReference type="InterPro" id="IPR016174">
    <property type="entry name" value="Di-haem_cyt_TM"/>
</dbReference>
<dbReference type="PANTHER" id="PTHR19271">
    <property type="entry name" value="CYTOCHROME B"/>
    <property type="match status" value="1"/>
</dbReference>
<dbReference type="PANTHER" id="PTHR19271:SF16">
    <property type="entry name" value="CYTOCHROME B"/>
    <property type="match status" value="1"/>
</dbReference>
<dbReference type="Pfam" id="PF00032">
    <property type="entry name" value="Cytochrom_B_C"/>
    <property type="match status" value="1"/>
</dbReference>
<dbReference type="Pfam" id="PF00033">
    <property type="entry name" value="Cytochrome_B"/>
    <property type="match status" value="1"/>
</dbReference>
<dbReference type="PIRSF" id="PIRSF038885">
    <property type="entry name" value="COB"/>
    <property type="match status" value="1"/>
</dbReference>
<dbReference type="SUPFAM" id="SSF81648">
    <property type="entry name" value="a domain/subunit of cytochrome bc1 complex (Ubiquinol-cytochrome c reductase)"/>
    <property type="match status" value="1"/>
</dbReference>
<dbReference type="SUPFAM" id="SSF81342">
    <property type="entry name" value="Transmembrane di-heme cytochromes"/>
    <property type="match status" value="1"/>
</dbReference>
<dbReference type="PROSITE" id="PS51003">
    <property type="entry name" value="CYTB_CTER"/>
    <property type="match status" value="1"/>
</dbReference>
<dbReference type="PROSITE" id="PS51002">
    <property type="entry name" value="CYTB_NTER"/>
    <property type="match status" value="1"/>
</dbReference>
<keyword id="KW-0249">Electron transport</keyword>
<keyword id="KW-0349">Heme</keyword>
<keyword id="KW-0408">Iron</keyword>
<keyword id="KW-0472">Membrane</keyword>
<keyword id="KW-0479">Metal-binding</keyword>
<keyword id="KW-0496">Mitochondrion</keyword>
<keyword id="KW-0999">Mitochondrion inner membrane</keyword>
<keyword id="KW-0679">Respiratory chain</keyword>
<keyword id="KW-0812">Transmembrane</keyword>
<keyword id="KW-1133">Transmembrane helix</keyword>
<keyword id="KW-0813">Transport</keyword>
<keyword id="KW-0830">Ubiquinone</keyword>
<protein>
    <recommendedName>
        <fullName>Cytochrome b</fullName>
    </recommendedName>
    <alternativeName>
        <fullName>Complex III subunit 3</fullName>
    </alternativeName>
    <alternativeName>
        <fullName>Complex III subunit III</fullName>
    </alternativeName>
    <alternativeName>
        <fullName>Cytochrome b-c1 complex subunit 3</fullName>
    </alternativeName>
    <alternativeName>
        <fullName>Ubiquinol-cytochrome-c reductase complex cytochrome b subunit</fullName>
    </alternativeName>
</protein>
<evidence type="ECO:0000250" key="1"/>
<evidence type="ECO:0000250" key="2">
    <source>
        <dbReference type="UniProtKB" id="P00157"/>
    </source>
</evidence>
<evidence type="ECO:0000255" key="3">
    <source>
        <dbReference type="PROSITE-ProRule" id="PRU00967"/>
    </source>
</evidence>
<evidence type="ECO:0000255" key="4">
    <source>
        <dbReference type="PROSITE-ProRule" id="PRU00968"/>
    </source>
</evidence>
<reference key="1">
    <citation type="journal article" date="2001" name="Mol. Phylogenet. Evol.">
        <title>Molecular systematics of bats of the genus Myotis (Vespertilionidae) suggests deterministic ecomorphological convergences.</title>
        <authorList>
            <person name="Ruedi M."/>
            <person name="Mayer F."/>
        </authorList>
    </citation>
    <scope>NUCLEOTIDE SEQUENCE [GENOMIC DNA]</scope>
    <source>
        <strain>Isolate FMNH 129208</strain>
    </source>
</reference>
<name>CYB_MYOOX</name>
<gene>
    <name type="primary">MT-CYB</name>
    <name type="synonym">COB</name>
    <name type="synonym">CYTB</name>
    <name type="synonym">MTCYB</name>
</gene>
<comment type="function">
    <text evidence="2">Component of the ubiquinol-cytochrome c reductase complex (complex III or cytochrome b-c1 complex) that is part of the mitochondrial respiratory chain. The b-c1 complex mediates electron transfer from ubiquinol to cytochrome c. Contributes to the generation of a proton gradient across the mitochondrial membrane that is then used for ATP synthesis.</text>
</comment>
<comment type="cofactor">
    <cofactor evidence="2">
        <name>heme b</name>
        <dbReference type="ChEBI" id="CHEBI:60344"/>
    </cofactor>
    <text evidence="2">Binds 2 heme b groups non-covalently.</text>
</comment>
<comment type="subunit">
    <text evidence="2">The cytochrome bc1 complex contains 11 subunits: 3 respiratory subunits (MT-CYB, CYC1 and UQCRFS1), 2 core proteins (UQCRC1 and UQCRC2) and 6 low-molecular weight proteins (UQCRH/QCR6, UQCRB/QCR7, UQCRQ/QCR8, UQCR10/QCR9, UQCR11/QCR10 and a cleavage product of UQCRFS1). This cytochrome bc1 complex then forms a dimer.</text>
</comment>
<comment type="subcellular location">
    <subcellularLocation>
        <location evidence="2">Mitochondrion inner membrane</location>
        <topology evidence="2">Multi-pass membrane protein</topology>
    </subcellularLocation>
</comment>
<comment type="miscellaneous">
    <text evidence="1">Heme 1 (or BL or b562) is low-potential and absorbs at about 562 nm, and heme 2 (or BH or b566) is high-potential and absorbs at about 566 nm.</text>
</comment>
<comment type="similarity">
    <text evidence="3 4">Belongs to the cytochrome b family.</text>
</comment>
<comment type="caution">
    <text evidence="2">The full-length protein contains only eight transmembrane helices, not nine as predicted by bioinformatics tools.</text>
</comment>
<feature type="chain" id="PRO_0000254729" description="Cytochrome b">
    <location>
        <begin position="1"/>
        <end position="379"/>
    </location>
</feature>
<feature type="transmembrane region" description="Helical" evidence="2">
    <location>
        <begin position="33"/>
        <end position="53"/>
    </location>
</feature>
<feature type="transmembrane region" description="Helical" evidence="2">
    <location>
        <begin position="77"/>
        <end position="98"/>
    </location>
</feature>
<feature type="transmembrane region" description="Helical" evidence="2">
    <location>
        <begin position="113"/>
        <end position="133"/>
    </location>
</feature>
<feature type="transmembrane region" description="Helical" evidence="2">
    <location>
        <begin position="178"/>
        <end position="198"/>
    </location>
</feature>
<feature type="transmembrane region" description="Helical" evidence="2">
    <location>
        <begin position="226"/>
        <end position="246"/>
    </location>
</feature>
<feature type="transmembrane region" description="Helical" evidence="2">
    <location>
        <begin position="288"/>
        <end position="308"/>
    </location>
</feature>
<feature type="transmembrane region" description="Helical" evidence="2">
    <location>
        <begin position="320"/>
        <end position="340"/>
    </location>
</feature>
<feature type="transmembrane region" description="Helical" evidence="2">
    <location>
        <begin position="347"/>
        <end position="367"/>
    </location>
</feature>
<feature type="binding site" description="axial binding residue" evidence="2">
    <location>
        <position position="83"/>
    </location>
    <ligand>
        <name>heme b</name>
        <dbReference type="ChEBI" id="CHEBI:60344"/>
        <label>b562</label>
    </ligand>
    <ligandPart>
        <name>Fe</name>
        <dbReference type="ChEBI" id="CHEBI:18248"/>
    </ligandPart>
</feature>
<feature type="binding site" description="axial binding residue" evidence="2">
    <location>
        <position position="97"/>
    </location>
    <ligand>
        <name>heme b</name>
        <dbReference type="ChEBI" id="CHEBI:60344"/>
        <label>b566</label>
    </ligand>
    <ligandPart>
        <name>Fe</name>
        <dbReference type="ChEBI" id="CHEBI:18248"/>
    </ligandPart>
</feature>
<feature type="binding site" description="axial binding residue" evidence="2">
    <location>
        <position position="182"/>
    </location>
    <ligand>
        <name>heme b</name>
        <dbReference type="ChEBI" id="CHEBI:60344"/>
        <label>b562</label>
    </ligand>
    <ligandPart>
        <name>Fe</name>
        <dbReference type="ChEBI" id="CHEBI:18248"/>
    </ligandPart>
</feature>
<feature type="binding site" description="axial binding residue" evidence="2">
    <location>
        <position position="196"/>
    </location>
    <ligand>
        <name>heme b</name>
        <dbReference type="ChEBI" id="CHEBI:60344"/>
        <label>b566</label>
    </ligand>
    <ligandPart>
        <name>Fe</name>
        <dbReference type="ChEBI" id="CHEBI:18248"/>
    </ligandPart>
</feature>
<feature type="binding site" evidence="2">
    <location>
        <position position="201"/>
    </location>
    <ligand>
        <name>a ubiquinone</name>
        <dbReference type="ChEBI" id="CHEBI:16389"/>
    </ligand>
</feature>
<sequence length="379" mass="42593">MTNIRKSHPLVKIINSSFIDLPAPSNISSWWNFGSLLGICLALQILTGLFLAMHYTSDTATAFNSVTHICRDVNYGWVLRYLHANGASMFFICLYLHVGRGLYYGSYMYTETWNIGVILLFAVMATAFMGYVLPWGQMSFWGATVITNLLSAIPYIGTNLVEWIWGGFSVDKATLTRFFAFHFLLPFIIAAMVMVHLLFLHETGSNNPTGIPANADMIPFHPYYTIKDILGLLLMITALLTLVLFFPDLLGDPDNYTPANPLNTPPHIKPEWYFLFAYAILRSIPNKLGGVLALVLSILILIIVPLLHTSKQRSMTFRPLSQCLFWLLXADLFTLTWIGGXPVEHPYIIIGQLASILYFSIIXILMPLTSLVXXHLXXX</sequence>
<accession>Q956Z7</accession>
<proteinExistence type="inferred from homology"/>
<organism>
    <name type="scientific">Myotis oxyotus</name>
    <name type="common">Montane myotis</name>
    <dbReference type="NCBI Taxonomy" id="159332"/>
    <lineage>
        <taxon>Eukaryota</taxon>
        <taxon>Metazoa</taxon>
        <taxon>Chordata</taxon>
        <taxon>Craniata</taxon>
        <taxon>Vertebrata</taxon>
        <taxon>Euteleostomi</taxon>
        <taxon>Mammalia</taxon>
        <taxon>Eutheria</taxon>
        <taxon>Laurasiatheria</taxon>
        <taxon>Chiroptera</taxon>
        <taxon>Yangochiroptera</taxon>
        <taxon>Vespertilionidae</taxon>
        <taxon>Myotis</taxon>
    </lineage>
</organism>